<protein>
    <recommendedName>
        <fullName>Uncharacterized protein YslB</fullName>
    </recommendedName>
</protein>
<keyword id="KW-0002">3D-structure</keyword>
<keyword id="KW-1185">Reference proteome</keyword>
<organism>
    <name type="scientific">Bacillus subtilis (strain 168)</name>
    <dbReference type="NCBI Taxonomy" id="224308"/>
    <lineage>
        <taxon>Bacteria</taxon>
        <taxon>Bacillati</taxon>
        <taxon>Bacillota</taxon>
        <taxon>Bacilli</taxon>
        <taxon>Bacillales</taxon>
        <taxon>Bacillaceae</taxon>
        <taxon>Bacillus</taxon>
    </lineage>
</organism>
<reference key="1">
    <citation type="journal article" date="1987" name="J. Biol. Chem.">
        <title>Nucleotide sequence of the overlapping genes for the subunits of Bacillus subtilis aspartokinase II and their control regions.</title>
        <authorList>
            <person name="Chen N.-Y."/>
            <person name="Hu F.M."/>
            <person name="Paulus H."/>
        </authorList>
    </citation>
    <scope>NUCLEOTIDE SEQUENCE [GENOMIC DNA]</scope>
</reference>
<reference key="2">
    <citation type="journal article" date="1996" name="Microbiology">
        <title>The dnaB-pheA (256 degrees-240 degrees) region of the Bacillus subtilis chromosome containing genes responsible for stress responses, the utilization of plant cell walls and primary metabolism.</title>
        <authorList>
            <person name="Wipat A."/>
            <person name="Carter N."/>
            <person name="Brignell C.S."/>
            <person name="Guy J.B."/>
            <person name="Piper K."/>
            <person name="Sanders J."/>
            <person name="Emmerson P.T."/>
            <person name="Harwood C.R."/>
        </authorList>
    </citation>
    <scope>NUCLEOTIDE SEQUENCE [GENOMIC DNA]</scope>
    <source>
        <strain>168</strain>
    </source>
</reference>
<reference key="3">
    <citation type="journal article" date="1997" name="Nature">
        <title>The complete genome sequence of the Gram-positive bacterium Bacillus subtilis.</title>
        <authorList>
            <person name="Kunst F."/>
            <person name="Ogasawara N."/>
            <person name="Moszer I."/>
            <person name="Albertini A.M."/>
            <person name="Alloni G."/>
            <person name="Azevedo V."/>
            <person name="Bertero M.G."/>
            <person name="Bessieres P."/>
            <person name="Bolotin A."/>
            <person name="Borchert S."/>
            <person name="Borriss R."/>
            <person name="Boursier L."/>
            <person name="Brans A."/>
            <person name="Braun M."/>
            <person name="Brignell S.C."/>
            <person name="Bron S."/>
            <person name="Brouillet S."/>
            <person name="Bruschi C.V."/>
            <person name="Caldwell B."/>
            <person name="Capuano V."/>
            <person name="Carter N.M."/>
            <person name="Choi S.-K."/>
            <person name="Codani J.-J."/>
            <person name="Connerton I.F."/>
            <person name="Cummings N.J."/>
            <person name="Daniel R.A."/>
            <person name="Denizot F."/>
            <person name="Devine K.M."/>
            <person name="Duesterhoeft A."/>
            <person name="Ehrlich S.D."/>
            <person name="Emmerson P.T."/>
            <person name="Entian K.-D."/>
            <person name="Errington J."/>
            <person name="Fabret C."/>
            <person name="Ferrari E."/>
            <person name="Foulger D."/>
            <person name="Fritz C."/>
            <person name="Fujita M."/>
            <person name="Fujita Y."/>
            <person name="Fuma S."/>
            <person name="Galizzi A."/>
            <person name="Galleron N."/>
            <person name="Ghim S.-Y."/>
            <person name="Glaser P."/>
            <person name="Goffeau A."/>
            <person name="Golightly E.J."/>
            <person name="Grandi G."/>
            <person name="Guiseppi G."/>
            <person name="Guy B.J."/>
            <person name="Haga K."/>
            <person name="Haiech J."/>
            <person name="Harwood C.R."/>
            <person name="Henaut A."/>
            <person name="Hilbert H."/>
            <person name="Holsappel S."/>
            <person name="Hosono S."/>
            <person name="Hullo M.-F."/>
            <person name="Itaya M."/>
            <person name="Jones L.-M."/>
            <person name="Joris B."/>
            <person name="Karamata D."/>
            <person name="Kasahara Y."/>
            <person name="Klaerr-Blanchard M."/>
            <person name="Klein C."/>
            <person name="Kobayashi Y."/>
            <person name="Koetter P."/>
            <person name="Koningstein G."/>
            <person name="Krogh S."/>
            <person name="Kumano M."/>
            <person name="Kurita K."/>
            <person name="Lapidus A."/>
            <person name="Lardinois S."/>
            <person name="Lauber J."/>
            <person name="Lazarevic V."/>
            <person name="Lee S.-M."/>
            <person name="Levine A."/>
            <person name="Liu H."/>
            <person name="Masuda S."/>
            <person name="Mauel C."/>
            <person name="Medigue C."/>
            <person name="Medina N."/>
            <person name="Mellado R.P."/>
            <person name="Mizuno M."/>
            <person name="Moestl D."/>
            <person name="Nakai S."/>
            <person name="Noback M."/>
            <person name="Noone D."/>
            <person name="O'Reilly M."/>
            <person name="Ogawa K."/>
            <person name="Ogiwara A."/>
            <person name="Oudega B."/>
            <person name="Park S.-H."/>
            <person name="Parro V."/>
            <person name="Pohl T.M."/>
            <person name="Portetelle D."/>
            <person name="Porwollik S."/>
            <person name="Prescott A.M."/>
            <person name="Presecan E."/>
            <person name="Pujic P."/>
            <person name="Purnelle B."/>
            <person name="Rapoport G."/>
            <person name="Rey M."/>
            <person name="Reynolds S."/>
            <person name="Rieger M."/>
            <person name="Rivolta C."/>
            <person name="Rocha E."/>
            <person name="Roche B."/>
            <person name="Rose M."/>
            <person name="Sadaie Y."/>
            <person name="Sato T."/>
            <person name="Scanlan E."/>
            <person name="Schleich S."/>
            <person name="Schroeter R."/>
            <person name="Scoffone F."/>
            <person name="Sekiguchi J."/>
            <person name="Sekowska A."/>
            <person name="Seror S.J."/>
            <person name="Serror P."/>
            <person name="Shin B.-S."/>
            <person name="Soldo B."/>
            <person name="Sorokin A."/>
            <person name="Tacconi E."/>
            <person name="Takagi T."/>
            <person name="Takahashi H."/>
            <person name="Takemaru K."/>
            <person name="Takeuchi M."/>
            <person name="Tamakoshi A."/>
            <person name="Tanaka T."/>
            <person name="Terpstra P."/>
            <person name="Tognoni A."/>
            <person name="Tosato V."/>
            <person name="Uchiyama S."/>
            <person name="Vandenbol M."/>
            <person name="Vannier F."/>
            <person name="Vassarotti A."/>
            <person name="Viari A."/>
            <person name="Wambutt R."/>
            <person name="Wedler E."/>
            <person name="Wedler H."/>
            <person name="Weitzenegger T."/>
            <person name="Winters P."/>
            <person name="Wipat A."/>
            <person name="Yamamoto H."/>
            <person name="Yamane K."/>
            <person name="Yasumoto K."/>
            <person name="Yata K."/>
            <person name="Yoshida K."/>
            <person name="Yoshikawa H.-F."/>
            <person name="Zumstein E."/>
            <person name="Yoshikawa H."/>
            <person name="Danchin A."/>
        </authorList>
    </citation>
    <scope>NUCLEOTIDE SEQUENCE [LARGE SCALE GENOMIC DNA]</scope>
    <source>
        <strain>168</strain>
    </source>
</reference>
<dbReference type="EMBL" id="J03294">
    <property type="protein sequence ID" value="AAA87320.1"/>
    <property type="molecule type" value="Genomic_DNA"/>
</dbReference>
<dbReference type="EMBL" id="Z75208">
    <property type="protein sequence ID" value="CAA99582.1"/>
    <property type="molecule type" value="Genomic_DNA"/>
</dbReference>
<dbReference type="EMBL" id="AL009126">
    <property type="protein sequence ID" value="CAB14806.1"/>
    <property type="molecule type" value="Genomic_DNA"/>
</dbReference>
<dbReference type="PIR" id="H69985">
    <property type="entry name" value="H69985"/>
</dbReference>
<dbReference type="RefSeq" id="NP_390724.1">
    <property type="nucleotide sequence ID" value="NC_000964.3"/>
</dbReference>
<dbReference type="RefSeq" id="WP_003222508.1">
    <property type="nucleotide sequence ID" value="NZ_OZ025638.1"/>
</dbReference>
<dbReference type="PDB" id="3NJC">
    <property type="method" value="X-ray"/>
    <property type="resolution" value="1.69 A"/>
    <property type="chains" value="A/B=1-148"/>
</dbReference>
<dbReference type="PDBsum" id="3NJC"/>
<dbReference type="SMR" id="P42955"/>
<dbReference type="FunCoup" id="P42955">
    <property type="interactions" value="23"/>
</dbReference>
<dbReference type="STRING" id="224308.BSU28460"/>
<dbReference type="jPOST" id="P42955"/>
<dbReference type="PaxDb" id="224308-BSU28460"/>
<dbReference type="DNASU" id="936806"/>
<dbReference type="EnsemblBacteria" id="CAB14806">
    <property type="protein sequence ID" value="CAB14806"/>
    <property type="gene ID" value="BSU_28460"/>
</dbReference>
<dbReference type="GeneID" id="936806"/>
<dbReference type="KEGG" id="bsu:BSU28460"/>
<dbReference type="PATRIC" id="fig|224308.179.peg.3092"/>
<dbReference type="eggNOG" id="COG1719">
    <property type="taxonomic scope" value="Bacteria"/>
</dbReference>
<dbReference type="InParanoid" id="P42955"/>
<dbReference type="OrthoDB" id="2965348at2"/>
<dbReference type="PhylomeDB" id="P42955"/>
<dbReference type="BioCyc" id="BSUB:BSU28460-MONOMER"/>
<dbReference type="EvolutionaryTrace" id="P42955"/>
<dbReference type="Proteomes" id="UP000001570">
    <property type="component" value="Chromosome"/>
</dbReference>
<dbReference type="Gene3D" id="3.30.1380.20">
    <property type="entry name" value="Trafficking protein particle complex subunit 3"/>
    <property type="match status" value="1"/>
</dbReference>
<dbReference type="InterPro" id="IPR019642">
    <property type="entry name" value="DUF2507"/>
</dbReference>
<dbReference type="InterPro" id="IPR024096">
    <property type="entry name" value="NO_sig/Golgi_transp_ligand-bd"/>
</dbReference>
<dbReference type="Pfam" id="PF10702">
    <property type="entry name" value="DUF2507"/>
    <property type="match status" value="1"/>
</dbReference>
<dbReference type="SUPFAM" id="SSF111126">
    <property type="entry name" value="Ligand-binding domain in the NO signalling and Golgi transport"/>
    <property type="match status" value="1"/>
</dbReference>
<name>YSLB_BACSU</name>
<proteinExistence type="evidence at protein level"/>
<gene>
    <name type="primary">yslB</name>
    <name type="ordered locus">BSU28460</name>
</gene>
<feature type="chain" id="PRO_0000049889" description="Uncharacterized protein YslB">
    <location>
        <begin position="1"/>
        <end position="148"/>
    </location>
</feature>
<feature type="helix" evidence="1">
    <location>
        <begin position="4"/>
        <end position="8"/>
    </location>
</feature>
<feature type="helix" evidence="1">
    <location>
        <begin position="9"/>
        <end position="12"/>
    </location>
</feature>
<feature type="strand" evidence="1">
    <location>
        <begin position="15"/>
        <end position="18"/>
    </location>
</feature>
<feature type="helix" evidence="1">
    <location>
        <begin position="19"/>
        <end position="26"/>
    </location>
</feature>
<feature type="helix" evidence="1">
    <location>
        <begin position="29"/>
        <end position="34"/>
    </location>
</feature>
<feature type="helix" evidence="1">
    <location>
        <begin position="35"/>
        <end position="37"/>
    </location>
</feature>
<feature type="helix" evidence="1">
    <location>
        <begin position="38"/>
        <end position="52"/>
    </location>
</feature>
<feature type="helix" evidence="1">
    <location>
        <begin position="58"/>
        <end position="60"/>
    </location>
</feature>
<feature type="helix" evidence="1">
    <location>
        <begin position="61"/>
        <end position="67"/>
    </location>
</feature>
<feature type="strand" evidence="1">
    <location>
        <begin position="72"/>
        <end position="79"/>
    </location>
</feature>
<feature type="strand" evidence="1">
    <location>
        <begin position="82"/>
        <end position="88"/>
    </location>
</feature>
<feature type="helix" evidence="1">
    <location>
        <begin position="90"/>
        <end position="98"/>
    </location>
</feature>
<feature type="strand" evidence="1">
    <location>
        <begin position="99"/>
        <end position="101"/>
    </location>
</feature>
<feature type="helix" evidence="1">
    <location>
        <begin position="105"/>
        <end position="118"/>
    </location>
</feature>
<feature type="strand" evidence="1">
    <location>
        <begin position="122"/>
        <end position="131"/>
    </location>
</feature>
<feature type="strand" evidence="1">
    <location>
        <begin position="136"/>
        <end position="144"/>
    </location>
</feature>
<sequence length="148" mass="17287">MKSKFEASIDNLKEIEMNAYAYELIREIVLPDMLGQDYSSMMYWAGKHLARKFPLESWEEFPAFFEEAGWGTLTNVSAKKQELEFELEGPIISNRLKHQKEPCFQLEAGFIAEQIQLMNDQIAESYEQVKKRADKVVLTVKWDMKDPV</sequence>
<accession>P42955</accession>
<evidence type="ECO:0007829" key="1">
    <source>
        <dbReference type="PDB" id="3NJC"/>
    </source>
</evidence>